<reference key="1">
    <citation type="journal article" date="2014" name="Stand. Genomic Sci.">
        <title>Complete genome sequence of Burkholderia phymatum STM815(T), a broad host range and efficient nitrogen-fixing symbiont of Mimosa species.</title>
        <authorList>
            <person name="Moulin L."/>
            <person name="Klonowska A."/>
            <person name="Caroline B."/>
            <person name="Booth K."/>
            <person name="Vriezen J.A."/>
            <person name="Melkonian R."/>
            <person name="James E.K."/>
            <person name="Young J.P."/>
            <person name="Bena G."/>
            <person name="Hauser L."/>
            <person name="Land M."/>
            <person name="Kyrpides N."/>
            <person name="Bruce D."/>
            <person name="Chain P."/>
            <person name="Copeland A."/>
            <person name="Pitluck S."/>
            <person name="Woyke T."/>
            <person name="Lizotte-Waniewski M."/>
            <person name="Bristow J."/>
            <person name="Riley M."/>
        </authorList>
    </citation>
    <scope>NUCLEOTIDE SEQUENCE [LARGE SCALE GENOMIC DNA]</scope>
    <source>
        <strain>DSM 17167 / CIP 108236 / LMG 21445 / STM815</strain>
    </source>
</reference>
<proteinExistence type="inferred from homology"/>
<name>TRUA_PARP8</name>
<dbReference type="EC" id="5.4.99.12" evidence="1"/>
<dbReference type="EMBL" id="CP001044">
    <property type="protein sequence ID" value="ACC73487.1"/>
    <property type="molecule type" value="Genomic_DNA"/>
</dbReference>
<dbReference type="RefSeq" id="WP_012403660.1">
    <property type="nucleotide sequence ID" value="NC_010623.1"/>
</dbReference>
<dbReference type="SMR" id="B2JQE6"/>
<dbReference type="STRING" id="391038.Bphy_4372"/>
<dbReference type="KEGG" id="bph:Bphy_4372"/>
<dbReference type="eggNOG" id="COG0101">
    <property type="taxonomic scope" value="Bacteria"/>
</dbReference>
<dbReference type="HOGENOM" id="CLU_014673_0_2_4"/>
<dbReference type="OrthoDB" id="9811823at2"/>
<dbReference type="Proteomes" id="UP000001192">
    <property type="component" value="Chromosome 2"/>
</dbReference>
<dbReference type="GO" id="GO:0003723">
    <property type="term" value="F:RNA binding"/>
    <property type="evidence" value="ECO:0007669"/>
    <property type="project" value="InterPro"/>
</dbReference>
<dbReference type="GO" id="GO:0160147">
    <property type="term" value="F:tRNA pseudouridine(38-40) synthase activity"/>
    <property type="evidence" value="ECO:0007669"/>
    <property type="project" value="UniProtKB-EC"/>
</dbReference>
<dbReference type="GO" id="GO:0031119">
    <property type="term" value="P:tRNA pseudouridine synthesis"/>
    <property type="evidence" value="ECO:0007669"/>
    <property type="project" value="UniProtKB-UniRule"/>
</dbReference>
<dbReference type="CDD" id="cd02570">
    <property type="entry name" value="PseudoU_synth_EcTruA"/>
    <property type="match status" value="1"/>
</dbReference>
<dbReference type="FunFam" id="3.30.70.580:FF:000001">
    <property type="entry name" value="tRNA pseudouridine synthase A"/>
    <property type="match status" value="1"/>
</dbReference>
<dbReference type="Gene3D" id="3.30.70.660">
    <property type="entry name" value="Pseudouridine synthase I, catalytic domain, C-terminal subdomain"/>
    <property type="match status" value="1"/>
</dbReference>
<dbReference type="Gene3D" id="3.30.70.580">
    <property type="entry name" value="Pseudouridine synthase I, catalytic domain, N-terminal subdomain"/>
    <property type="match status" value="1"/>
</dbReference>
<dbReference type="HAMAP" id="MF_00171">
    <property type="entry name" value="TruA"/>
    <property type="match status" value="1"/>
</dbReference>
<dbReference type="InterPro" id="IPR020103">
    <property type="entry name" value="PsdUridine_synth_cat_dom_sf"/>
</dbReference>
<dbReference type="InterPro" id="IPR001406">
    <property type="entry name" value="PsdUridine_synth_TruA"/>
</dbReference>
<dbReference type="InterPro" id="IPR020097">
    <property type="entry name" value="PsdUridine_synth_TruA_a/b_dom"/>
</dbReference>
<dbReference type="InterPro" id="IPR020095">
    <property type="entry name" value="PsdUridine_synth_TruA_C"/>
</dbReference>
<dbReference type="InterPro" id="IPR020094">
    <property type="entry name" value="TruA/RsuA/RluB/E/F_N"/>
</dbReference>
<dbReference type="NCBIfam" id="TIGR00071">
    <property type="entry name" value="hisT_truA"/>
    <property type="match status" value="1"/>
</dbReference>
<dbReference type="PANTHER" id="PTHR11142">
    <property type="entry name" value="PSEUDOURIDYLATE SYNTHASE"/>
    <property type="match status" value="1"/>
</dbReference>
<dbReference type="PANTHER" id="PTHR11142:SF0">
    <property type="entry name" value="TRNA PSEUDOURIDINE SYNTHASE-LIKE 1"/>
    <property type="match status" value="1"/>
</dbReference>
<dbReference type="Pfam" id="PF01416">
    <property type="entry name" value="PseudoU_synth_1"/>
    <property type="match status" value="2"/>
</dbReference>
<dbReference type="PIRSF" id="PIRSF001430">
    <property type="entry name" value="tRNA_psdUrid_synth"/>
    <property type="match status" value="1"/>
</dbReference>
<dbReference type="SUPFAM" id="SSF55120">
    <property type="entry name" value="Pseudouridine synthase"/>
    <property type="match status" value="1"/>
</dbReference>
<sequence length="267" mass="29923">MTRIALGIQYDGAAFCGWQSQPHGKTVQDELERALREFALTPLQTVVAGRTDTGVHGLGQVVHFDTELDRAEFSWVRGTNAFLPSTVAVQWAKPMPDAFHARFSAFERTYYYALYVHPVRSPMLASRAGWIHTPLDVDAMREAAACLIGEHDFSAFRSSECQSKTPVKHLYQIDIRPQGDFIHFRFRANAFLHHMVRNLMGCLVAVGRGRYPAAWLSEVLHGRDRNRAAPTFMPDGLYLAQVGYPETFAVPAPQAGSVPWSTVWTDS</sequence>
<accession>B2JQE6</accession>
<keyword id="KW-0413">Isomerase</keyword>
<keyword id="KW-1185">Reference proteome</keyword>
<keyword id="KW-0819">tRNA processing</keyword>
<feature type="chain" id="PRO_1000097726" description="tRNA pseudouridine synthase A">
    <location>
        <begin position="1"/>
        <end position="267"/>
    </location>
</feature>
<feature type="active site" description="Nucleophile" evidence="1">
    <location>
        <position position="52"/>
    </location>
</feature>
<feature type="binding site" evidence="1">
    <location>
        <position position="110"/>
    </location>
    <ligand>
        <name>substrate</name>
    </ligand>
</feature>
<comment type="function">
    <text evidence="1">Formation of pseudouridine at positions 38, 39 and 40 in the anticodon stem and loop of transfer RNAs.</text>
</comment>
<comment type="catalytic activity">
    <reaction evidence="1">
        <text>uridine(38/39/40) in tRNA = pseudouridine(38/39/40) in tRNA</text>
        <dbReference type="Rhea" id="RHEA:22376"/>
        <dbReference type="Rhea" id="RHEA-COMP:10085"/>
        <dbReference type="Rhea" id="RHEA-COMP:10087"/>
        <dbReference type="ChEBI" id="CHEBI:65314"/>
        <dbReference type="ChEBI" id="CHEBI:65315"/>
        <dbReference type="EC" id="5.4.99.12"/>
    </reaction>
</comment>
<comment type="subunit">
    <text evidence="1">Homodimer.</text>
</comment>
<comment type="similarity">
    <text evidence="1">Belongs to the tRNA pseudouridine synthase TruA family.</text>
</comment>
<organism>
    <name type="scientific">Paraburkholderia phymatum (strain DSM 17167 / CIP 108236 / LMG 21445 / STM815)</name>
    <name type="common">Burkholderia phymatum</name>
    <dbReference type="NCBI Taxonomy" id="391038"/>
    <lineage>
        <taxon>Bacteria</taxon>
        <taxon>Pseudomonadati</taxon>
        <taxon>Pseudomonadota</taxon>
        <taxon>Betaproteobacteria</taxon>
        <taxon>Burkholderiales</taxon>
        <taxon>Burkholderiaceae</taxon>
        <taxon>Paraburkholderia</taxon>
    </lineage>
</organism>
<evidence type="ECO:0000255" key="1">
    <source>
        <dbReference type="HAMAP-Rule" id="MF_00171"/>
    </source>
</evidence>
<protein>
    <recommendedName>
        <fullName evidence="1">tRNA pseudouridine synthase A</fullName>
        <ecNumber evidence="1">5.4.99.12</ecNumber>
    </recommendedName>
    <alternativeName>
        <fullName evidence="1">tRNA pseudouridine(38-40) synthase</fullName>
    </alternativeName>
    <alternativeName>
        <fullName evidence="1">tRNA pseudouridylate synthase I</fullName>
    </alternativeName>
    <alternativeName>
        <fullName evidence="1">tRNA-uridine isomerase I</fullName>
    </alternativeName>
</protein>
<gene>
    <name evidence="1" type="primary">truA</name>
    <name type="ordered locus">Bphy_4372</name>
</gene>